<gene>
    <name type="primary">NDUFB7</name>
</gene>
<keyword id="KW-0002">3D-structure</keyword>
<keyword id="KW-1015">Disulfide bond</keyword>
<keyword id="KW-0249">Electron transport</keyword>
<keyword id="KW-0449">Lipoprotein</keyword>
<keyword id="KW-0472">Membrane</keyword>
<keyword id="KW-0496">Mitochondrion</keyword>
<keyword id="KW-0999">Mitochondrion inner membrane</keyword>
<keyword id="KW-0519">Myristate</keyword>
<keyword id="KW-0597">Phosphoprotein</keyword>
<keyword id="KW-1274">Primary mitochondrial disease</keyword>
<keyword id="KW-1267">Proteomics identification</keyword>
<keyword id="KW-1185">Reference proteome</keyword>
<keyword id="KW-0679">Respiratory chain</keyword>
<keyword id="KW-0813">Transport</keyword>
<reference key="1">
    <citation type="journal article" date="1990" name="Biochem. Biophys. Res. Commun.">
        <title>cDNA cloning of a novel cell adhesion protein expressed in human squamous carcinoma cells.</title>
        <authorList>
            <person name="Wong Y.-C."/>
            <person name="Tsao S.-W."/>
            <person name="Kakefuda M."/>
            <person name="Bernal S.D."/>
        </authorList>
    </citation>
    <scope>NUCLEOTIDE SEQUENCE [MRNA]</scope>
</reference>
<reference key="2">
    <citation type="journal article" date="2000" name="Hum. Genet.">
        <title>Characterization of the human complex I NDUFB7 and 17.2-kDa cDNAs and mutational analysis of 19 genes of the HP fraction in complex I-deficient-patients.</title>
        <authorList>
            <person name="Triepels R."/>
            <person name="Smeitink J."/>
            <person name="Loeffen J."/>
            <person name="Smeets R."/>
            <person name="Trijbels F."/>
            <person name="van den Heuvel L."/>
        </authorList>
    </citation>
    <scope>NUCLEOTIDE SEQUENCE [MRNA]</scope>
</reference>
<reference key="3">
    <citation type="journal article" date="2000" name="Proc. Natl. Acad. Sci. U.S.A.">
        <title>Gene expression profiling in the human hypothalamus-pituitary-adrenal axis and full-length cDNA cloning.</title>
        <authorList>
            <person name="Hu R.-M."/>
            <person name="Han Z.-G."/>
            <person name="Song H.-D."/>
            <person name="Peng Y.-D."/>
            <person name="Huang Q.-H."/>
            <person name="Ren S.-X."/>
            <person name="Gu Y.-J."/>
            <person name="Huang C.-H."/>
            <person name="Li Y.-B."/>
            <person name="Jiang C.-L."/>
            <person name="Fu G."/>
            <person name="Zhang Q.-H."/>
            <person name="Gu B.-W."/>
            <person name="Dai M."/>
            <person name="Mao Y.-F."/>
            <person name="Gao G.-F."/>
            <person name="Rong R."/>
            <person name="Ye M."/>
            <person name="Zhou J."/>
            <person name="Xu S.-H."/>
            <person name="Gu J."/>
            <person name="Shi J.-X."/>
            <person name="Jin W.-R."/>
            <person name="Zhang C.-K."/>
            <person name="Wu T.-M."/>
            <person name="Huang G.-Y."/>
            <person name="Chen Z."/>
            <person name="Chen M.-D."/>
            <person name="Chen J.-L."/>
        </authorList>
    </citation>
    <scope>NUCLEOTIDE SEQUENCE [LARGE SCALE MRNA]</scope>
    <source>
        <tissue>Hypothalamus</tissue>
    </source>
</reference>
<reference key="4">
    <citation type="submission" date="2004-05" db="EMBL/GenBank/DDBJ databases">
        <title>Cloning of human full open reading frames in Gateway(TM) system entry vector (pDONR201).</title>
        <authorList>
            <person name="Ebert L."/>
            <person name="Schick M."/>
            <person name="Neubert P."/>
            <person name="Schatten R."/>
            <person name="Henze S."/>
            <person name="Korn B."/>
        </authorList>
    </citation>
    <scope>NUCLEOTIDE SEQUENCE [LARGE SCALE MRNA]</scope>
</reference>
<reference key="5">
    <citation type="submission" date="2005-07" db="EMBL/GenBank/DDBJ databases">
        <authorList>
            <person name="Mural R.J."/>
            <person name="Istrail S."/>
            <person name="Sutton G.G."/>
            <person name="Florea L."/>
            <person name="Halpern A.L."/>
            <person name="Mobarry C.M."/>
            <person name="Lippert R."/>
            <person name="Walenz B."/>
            <person name="Shatkay H."/>
            <person name="Dew I."/>
            <person name="Miller J.R."/>
            <person name="Flanigan M.J."/>
            <person name="Edwards N.J."/>
            <person name="Bolanos R."/>
            <person name="Fasulo D."/>
            <person name="Halldorsson B.V."/>
            <person name="Hannenhalli S."/>
            <person name="Turner R."/>
            <person name="Yooseph S."/>
            <person name="Lu F."/>
            <person name="Nusskern D.R."/>
            <person name="Shue B.C."/>
            <person name="Zheng X.H."/>
            <person name="Zhong F."/>
            <person name="Delcher A.L."/>
            <person name="Huson D.H."/>
            <person name="Kravitz S.A."/>
            <person name="Mouchard L."/>
            <person name="Reinert K."/>
            <person name="Remington K.A."/>
            <person name="Clark A.G."/>
            <person name="Waterman M.S."/>
            <person name="Eichler E.E."/>
            <person name="Adams M.D."/>
            <person name="Hunkapiller M.W."/>
            <person name="Myers E.W."/>
            <person name="Venter J.C."/>
        </authorList>
    </citation>
    <scope>NUCLEOTIDE SEQUENCE [LARGE SCALE GENOMIC DNA]</scope>
</reference>
<reference key="6">
    <citation type="journal article" date="2004" name="Genome Res.">
        <title>The status, quality, and expansion of the NIH full-length cDNA project: the Mammalian Gene Collection (MGC).</title>
        <authorList>
            <consortium name="The MGC Project Team"/>
        </authorList>
    </citation>
    <scope>NUCLEOTIDE SEQUENCE [LARGE SCALE MRNA]</scope>
    <source>
        <tissue>Ovary</tissue>
    </source>
</reference>
<reference key="7">
    <citation type="journal article" date="2003" name="J. Biol. Chem.">
        <title>The subunit composition of the human NADH dehydrogenase obtained by rapid one-step immunopurification.</title>
        <authorList>
            <person name="Murray J."/>
            <person name="Zhang B."/>
            <person name="Taylor S.W."/>
            <person name="Oglesbee D."/>
            <person name="Fahy E."/>
            <person name="Marusich M.F."/>
            <person name="Ghosh S.S."/>
            <person name="Capaldi R.A."/>
        </authorList>
    </citation>
    <scope>IDENTIFICATION IN THE NADH-UBIQUINONE OXIDOREDUCTASE COMPLEX</scope>
    <scope>IDENTIFICATION BY MASS SPECTROMETRY</scope>
</reference>
<reference key="8">
    <citation type="journal article" date="2011" name="BMC Syst. Biol.">
        <title>Initial characterization of the human central proteome.</title>
        <authorList>
            <person name="Burkard T.R."/>
            <person name="Planyavsky M."/>
            <person name="Kaupe I."/>
            <person name="Breitwieser F.P."/>
            <person name="Buerckstuemmer T."/>
            <person name="Bennett K.L."/>
            <person name="Superti-Furga G."/>
            <person name="Colinge J."/>
        </authorList>
    </citation>
    <scope>IDENTIFICATION BY MASS SPECTROMETRY [LARGE SCALE ANALYSIS]</scope>
</reference>
<reference key="9">
    <citation type="journal article" date="2011" name="FEBS Lett.">
        <title>NDUFB7 and NDUFA8 are located at the intermembrane surface of complex I.</title>
        <authorList>
            <person name="Szklarczyk R."/>
            <person name="Wanschers B.F."/>
            <person name="Nabuurs S.B."/>
            <person name="Nouws J."/>
            <person name="Nijtmans L.G."/>
            <person name="Huynen M.A."/>
        </authorList>
    </citation>
    <scope>SUBCELLULAR LOCATION</scope>
    <scope>DOMAIN</scope>
    <scope>MOTIF</scope>
</reference>
<reference key="10">
    <citation type="journal article" date="2015" name="Proteomics">
        <title>N-terminome analysis of the human mitochondrial proteome.</title>
        <authorList>
            <person name="Vaca Jacome A.S."/>
            <person name="Rabilloud T."/>
            <person name="Schaeffer-Reiss C."/>
            <person name="Rompais M."/>
            <person name="Ayoub D."/>
            <person name="Lane L."/>
            <person name="Bairoch A."/>
            <person name="Van Dorsselaer A."/>
            <person name="Carapito C."/>
        </authorList>
    </citation>
    <scope>IDENTIFICATION BY MASS SPECTROMETRY [LARGE SCALE ANALYSIS]</scope>
</reference>
<reference key="11">
    <citation type="journal article" date="2016" name="Nature">
        <title>Accessory subunits are integral for assembly and function of human mitochondrial complex I.</title>
        <authorList>
            <person name="Stroud D.A."/>
            <person name="Surgenor E.E."/>
            <person name="Formosa L.E."/>
            <person name="Reljic B."/>
            <person name="Frazier A.E."/>
            <person name="Dibley M.G."/>
            <person name="Osellame L.D."/>
            <person name="Stait T."/>
            <person name="Beilharz T.H."/>
            <person name="Thorburn D.R."/>
            <person name="Salim A."/>
            <person name="Ryan M.T."/>
        </authorList>
    </citation>
    <scope>FUNCTION</scope>
    <scope>IDENTIFICATION IN THE NADH-UBIQUINONE OXIDOREDUCTASE COMPLEX</scope>
</reference>
<reference key="12">
    <citation type="journal article" date="2021" name="Hum. Mutat.">
        <title>Severe congenital lactic acidosis and hypertrophic cardiomyopathy caused by an intronic variant in NDUFB7.</title>
        <authorList>
            <person name="Correia S.P."/>
            <person name="Moedas M.F."/>
            <person name="Naess K."/>
            <person name="Bruhn H."/>
            <person name="Maffezzini C."/>
            <person name="Calvo-Garrido J."/>
            <person name="Lesko N."/>
            <person name="Wibom R."/>
            <person name="Schober F.A."/>
            <person name="Jemt A."/>
            <person name="Stranneheim H."/>
            <person name="Freyer C."/>
            <person name="Wedell A."/>
            <person name="Wredenberg A."/>
        </authorList>
    </citation>
    <scope>INVOLVEMENT IN MC1DN39</scope>
    <scope>FUNCTION</scope>
</reference>
<comment type="function">
    <text evidence="7 8">Accessory subunit of the mitochondrial membrane respiratory chain NADH dehydrogenase (Complex I), that is believed not to be involved in catalysis. Complex I functions in the transfer of electrons from NADH to the respiratory chain. The immediate electron acceptor for the enzyme is believed to be ubiquinone.</text>
</comment>
<comment type="subunit">
    <text evidence="5 7">Complex I is composed of 45 different subunits.</text>
</comment>
<comment type="interaction">
    <interactant intactId="EBI-1246238">
        <id>P17568</id>
    </interactant>
    <interactant intactId="EBI-12226473">
        <id>Q5U5Z8-3</id>
        <label>AGBL2</label>
    </interactant>
    <organismsDiffer>false</organismsDiffer>
    <experiments>3</experiments>
</comment>
<comment type="interaction">
    <interactant intactId="EBI-1246238">
        <id>P17568</id>
    </interactant>
    <interactant intactId="EBI-8643161">
        <id>Q9NX04</id>
        <label>AIRIM</label>
    </interactant>
    <organismsDiffer>false</organismsDiffer>
    <experiments>3</experiments>
</comment>
<comment type="interaction">
    <interactant intactId="EBI-1246238">
        <id>P17568</id>
    </interactant>
    <interactant intactId="EBI-12170453">
        <id>Q8N2N9-4</id>
        <label>ANKRD36B</label>
    </interactant>
    <organismsDiffer>false</organismsDiffer>
    <experiments>3</experiments>
</comment>
<comment type="interaction">
    <interactant intactId="EBI-1246238">
        <id>P17568</id>
    </interactant>
    <interactant intactId="EBI-12006308">
        <id>Q7Z3C6-3</id>
        <label>ATG9A</label>
    </interactant>
    <organismsDiffer>false</organismsDiffer>
    <experiments>3</experiments>
</comment>
<comment type="interaction">
    <interactant intactId="EBI-1246238">
        <id>P17568</id>
    </interactant>
    <interactant intactId="EBI-1104933">
        <id>Q8N4L8</id>
        <label>CCDC24</label>
    </interactant>
    <organismsDiffer>false</organismsDiffer>
    <experiments>3</experiments>
</comment>
<comment type="interaction">
    <interactant intactId="EBI-1246238">
        <id>P17568</id>
    </interactant>
    <interactant intactId="EBI-395261">
        <id>P24863</id>
        <label>CCNC</label>
    </interactant>
    <organismsDiffer>false</organismsDiffer>
    <experiments>3</experiments>
</comment>
<comment type="interaction">
    <interactant intactId="EBI-1246238">
        <id>P17568</id>
    </interactant>
    <interactant intactId="EBI-5278764">
        <id>Q96GN5</id>
        <label>CDCA7L</label>
    </interactant>
    <organismsDiffer>false</organismsDiffer>
    <experiments>3</experiments>
</comment>
<comment type="interaction">
    <interactant intactId="EBI-1246238">
        <id>P17568</id>
    </interactant>
    <interactant intactId="EBI-745859">
        <id>P55273</id>
        <label>CDKN2D</label>
    </interactant>
    <organismsDiffer>false</organismsDiffer>
    <experiments>3</experiments>
</comment>
<comment type="interaction">
    <interactant intactId="EBI-1246238">
        <id>P17568</id>
    </interactant>
    <interactant intactId="EBI-741528">
        <id>Q9UKJ5</id>
        <label>CHIC2</label>
    </interactant>
    <organismsDiffer>false</organismsDiffer>
    <experiments>3</experiments>
</comment>
<comment type="interaction">
    <interactant intactId="EBI-1246238">
        <id>P17568</id>
    </interactant>
    <interactant intactId="EBI-739784">
        <id>Q9BW66</id>
        <label>CINP</label>
    </interactant>
    <organismsDiffer>false</organismsDiffer>
    <experiments>3</experiments>
</comment>
<comment type="interaction">
    <interactant intactId="EBI-1246238">
        <id>P17568</id>
    </interactant>
    <interactant intactId="EBI-11980535">
        <id>P51800-3</id>
        <label>CLCNKA</label>
    </interactant>
    <organismsDiffer>false</organismsDiffer>
    <experiments>3</experiments>
</comment>
<comment type="interaction">
    <interactant intactId="EBI-1246238">
        <id>P17568</id>
    </interactant>
    <interactant intactId="EBI-11962928">
        <id>Q9UI47-2</id>
        <label>CTNNA3</label>
    </interactant>
    <organismsDiffer>false</organismsDiffer>
    <experiments>3</experiments>
</comment>
<comment type="interaction">
    <interactant intactId="EBI-1246238">
        <id>P17568</id>
    </interactant>
    <interactant intactId="EBI-744099">
        <id>Q9H0I2</id>
        <label>ENKD1</label>
    </interactant>
    <organismsDiffer>false</organismsDiffer>
    <experiments>3</experiments>
</comment>
<comment type="interaction">
    <interactant intactId="EBI-1246238">
        <id>P17568</id>
    </interactant>
    <interactant intactId="EBI-7225287">
        <id>Q96MY7</id>
        <label>FAM161B</label>
    </interactant>
    <organismsDiffer>false</organismsDiffer>
    <experiments>3</experiments>
</comment>
<comment type="interaction">
    <interactant intactId="EBI-1246238">
        <id>P17568</id>
    </interactant>
    <interactant intactId="EBI-6658203">
        <id>Q86YD7</id>
        <label>FAM90A1</label>
    </interactant>
    <organismsDiffer>false</organismsDiffer>
    <experiments>3</experiments>
</comment>
<comment type="interaction">
    <interactant intactId="EBI-1246238">
        <id>P17568</id>
    </interactant>
    <interactant intactId="EBI-744104">
        <id>P55040</id>
        <label>GEM</label>
    </interactant>
    <organismsDiffer>false</organismsDiffer>
    <experiments>3</experiments>
</comment>
<comment type="interaction">
    <interactant intactId="EBI-1246238">
        <id>P17568</id>
    </interactant>
    <interactant intactId="EBI-11959863">
        <id>Q9NWQ4-1</id>
        <label>GPATCH2L</label>
    </interactant>
    <organismsDiffer>false</organismsDiffer>
    <experiments>3</experiments>
</comment>
<comment type="interaction">
    <interactant intactId="EBI-1246238">
        <id>P17568</id>
    </interactant>
    <interactant intactId="EBI-740553">
        <id>P13807</id>
        <label>GYS1</label>
    </interactant>
    <organismsDiffer>false</organismsDiffer>
    <experiments>3</experiments>
</comment>
<comment type="interaction">
    <interactant intactId="EBI-1246238">
        <id>P17568</id>
    </interactant>
    <interactant intactId="EBI-11955579">
        <id>P60014</id>
        <label>KRTAP10-10</label>
    </interactant>
    <organismsDiffer>false</organismsDiffer>
    <experiments>3</experiments>
</comment>
<comment type="interaction">
    <interactant intactId="EBI-1246238">
        <id>P17568</id>
    </interactant>
    <interactant intactId="EBI-11959475">
        <id>P25791-3</id>
        <label>LMO2</label>
    </interactant>
    <organismsDiffer>false</organismsDiffer>
    <experiments>3</experiments>
</comment>
<comment type="interaction">
    <interactant intactId="EBI-1246238">
        <id>P17568</id>
    </interactant>
    <interactant intactId="EBI-746778">
        <id>Q96A72</id>
        <label>MAGOHB</label>
    </interactant>
    <organismsDiffer>false</organismsDiffer>
    <experiments>3</experiments>
</comment>
<comment type="interaction">
    <interactant intactId="EBI-1246238">
        <id>P17568</id>
    </interactant>
    <interactant intactId="EBI-8025850">
        <id>O14770-4</id>
        <label>MEIS2</label>
    </interactant>
    <organismsDiffer>false</organismsDiffer>
    <experiments>3</experiments>
</comment>
<comment type="interaction">
    <interactant intactId="EBI-1246238">
        <id>P17568</id>
    </interactant>
    <interactant intactId="EBI-2340269">
        <id>Q13064</id>
        <label>MKRN3</label>
    </interactant>
    <organismsDiffer>false</organismsDiffer>
    <experiments>3</experiments>
</comment>
<comment type="interaction">
    <interactant intactId="EBI-1246238">
        <id>P17568</id>
    </interactant>
    <interactant intactId="EBI-352889">
        <id>Q15653</id>
        <label>NFKBIB</label>
    </interactant>
    <organismsDiffer>false</organismsDiffer>
    <experiments>3</experiments>
</comment>
<comment type="interaction">
    <interactant intactId="EBI-1246238">
        <id>P17568</id>
    </interactant>
    <interactant intactId="EBI-10271199">
        <id>Q8NI38</id>
        <label>NFKBID</label>
    </interactant>
    <organismsDiffer>false</organismsDiffer>
    <experiments>3</experiments>
</comment>
<comment type="interaction">
    <interactant intactId="EBI-1246238">
        <id>P17568</id>
    </interactant>
    <interactant intactId="EBI-1504830">
        <id>Q9P2K3-2</id>
        <label>RCOR3</label>
    </interactant>
    <organismsDiffer>false</organismsDiffer>
    <experiments>3</experiments>
</comment>
<comment type="interaction">
    <interactant intactId="EBI-1246238">
        <id>P17568</id>
    </interactant>
    <interactant intactId="EBI-10253121">
        <id>Q6P9E2</id>
        <label>RECK</label>
    </interactant>
    <organismsDiffer>false</organismsDiffer>
    <experiments>3</experiments>
</comment>
<comment type="interaction">
    <interactant intactId="EBI-1246238">
        <id>P17568</id>
    </interactant>
    <interactant intactId="EBI-10226430">
        <id>Q0D2K3</id>
        <label>RIPPLY1</label>
    </interactant>
    <organismsDiffer>false</organismsDiffer>
    <experiments>3</experiments>
</comment>
<comment type="interaction">
    <interactant intactId="EBI-1246238">
        <id>P17568</id>
    </interactant>
    <interactant intactId="EBI-10246897">
        <id>Q5TAB7</id>
        <label>RIPPLY2</label>
    </interactant>
    <organismsDiffer>false</organismsDiffer>
    <experiments>3</experiments>
</comment>
<comment type="interaction">
    <interactant intactId="EBI-1246238">
        <id>P17568</id>
    </interactant>
    <interactant intactId="EBI-748391">
        <id>Q9BWG6</id>
        <label>SCNM1</label>
    </interactant>
    <organismsDiffer>false</organismsDiffer>
    <experiments>3</experiments>
</comment>
<comment type="interaction">
    <interactant intactId="EBI-1246238">
        <id>P17568</id>
    </interactant>
    <interactant intactId="EBI-5235340">
        <id>Q7Z699</id>
        <label>SPRED1</label>
    </interactant>
    <organismsDiffer>false</organismsDiffer>
    <experiments>3</experiments>
</comment>
<comment type="interaction">
    <interactant intactId="EBI-1246238">
        <id>P17568</id>
    </interactant>
    <interactant intactId="EBI-7082156">
        <id>Q7Z698</id>
        <label>SPRED2</label>
    </interactant>
    <organismsDiffer>false</organismsDiffer>
    <experiments>3</experiments>
</comment>
<comment type="interaction">
    <interactant intactId="EBI-1246238">
        <id>P17568</id>
    </interactant>
    <interactant intactId="EBI-12140683">
        <id>Q9BX79-6</id>
        <label>STRA6</label>
    </interactant>
    <organismsDiffer>false</organismsDiffer>
    <experiments>3</experiments>
</comment>
<comment type="interaction">
    <interactant intactId="EBI-1246238">
        <id>P17568</id>
    </interactant>
    <interactant intactId="EBI-2514218">
        <id>Q01664</id>
        <label>TFAP4</label>
    </interactant>
    <organismsDiffer>false</organismsDiffer>
    <experiments>3</experiments>
</comment>
<comment type="interaction">
    <interactant intactId="EBI-1246238">
        <id>P17568</id>
    </interactant>
    <interactant intactId="EBI-11741437">
        <id>Q08117-2</id>
        <label>TLE5</label>
    </interactant>
    <organismsDiffer>false</organismsDiffer>
    <experiments>3</experiments>
</comment>
<comment type="interaction">
    <interactant intactId="EBI-1246238">
        <id>P17568</id>
    </interactant>
    <interactant intactId="EBI-12369705">
        <id>Q9Y6T4</id>
        <label>WUGSC:H_DJ0726N20.gs.b</label>
    </interactant>
    <organismsDiffer>false</organismsDiffer>
    <experiments>3</experiments>
</comment>
<comment type="interaction">
    <interactant intactId="EBI-1246238">
        <id>P17568</id>
    </interactant>
    <interactant intactId="EBI-373456">
        <id>Q9Y3S2</id>
        <label>ZNF330</label>
    </interactant>
    <organismsDiffer>false</organismsDiffer>
    <experiments>3</experiments>
</comment>
<comment type="interaction">
    <interactant intactId="EBI-1246238">
        <id>P17568</id>
    </interactant>
    <interactant intactId="EBI-740727">
        <id>Q8TAU3</id>
        <label>ZNF417</label>
    </interactant>
    <organismsDiffer>false</organismsDiffer>
    <experiments>3</experiments>
</comment>
<comment type="interaction">
    <interactant intactId="EBI-1246238">
        <id>P17568</id>
    </interactant>
    <interactant intactId="EBI-10273713">
        <id>Q8TBZ8</id>
        <label>ZNF564</label>
    </interactant>
    <organismsDiffer>false</organismsDiffer>
    <experiments>3</experiments>
</comment>
<comment type="interaction">
    <interactant intactId="EBI-1246238">
        <id>P17568</id>
    </interactant>
    <interactant intactId="EBI-6427977">
        <id>Q96SQ5</id>
        <label>ZNF587</label>
    </interactant>
    <organismsDiffer>false</organismsDiffer>
    <experiments>3</experiments>
</comment>
<comment type="subcellular location">
    <subcellularLocation>
        <location evidence="6">Mitochondrion inner membrane</location>
        <topology evidence="6">Peripheral membrane protein</topology>
    </subcellularLocation>
    <subcellularLocation>
        <location evidence="6">Mitochondrion intermembrane space</location>
    </subcellularLocation>
</comment>
<comment type="domain">
    <text evidence="6">Contains two C-X9-C motifs that are predicted to form a helix-coil-helix structure, permitting the formation of intramolecular disulfide bonds.</text>
</comment>
<comment type="disease" evidence="8">
    <disease id="DI-06550">
        <name>Mitochondrial complex I deficiency, nuclear type 39</name>
        <acronym>MC1DN39</acronym>
        <description>A form of mitochondrial complex I deficiency, the most common biochemical signature of mitochondrial disorders, a group of highly heterogeneous conditions characterized by defective oxidative phosphorylation, which collectively affects 1 in 5-10000 live births. Clinical disorders have variable severity, ranging from lethal neonatal disease to adult-onset neurodegenerative disorders. Phenotypes include macrocephaly with progressive leukodystrophy, non-specific encephalopathy, cardiomyopathy, myopathy, liver disease, Leigh syndrome, Leber hereditary optic neuropathy, and some forms of Parkinson disease. MC1DN39 is an autosomal recessive form characterized by intrauterine growth retardation, anemia, and postpartum hypertrophic cardiomyopathy, lactic acidosis, encephalopathy, and a severe complex I defect with a fatal outcome.</description>
        <dbReference type="MIM" id="620135"/>
    </disease>
    <text>The disease is caused by variants affecting the gene represented in this entry.</text>
</comment>
<comment type="similarity">
    <text evidence="9">Belongs to the complex I NDUFB7 subunit family.</text>
</comment>
<comment type="sequence caution" evidence="9">
    <conflict type="frameshift">
        <sequence resource="EMBL-CDS" id="AAA35675"/>
    </conflict>
</comment>
<protein>
    <recommendedName>
        <fullName>NADH dehydrogenase [ubiquinone] 1 beta subcomplex subunit 7</fullName>
    </recommendedName>
    <alternativeName>
        <fullName>Cell adhesion protein SQM1</fullName>
    </alternativeName>
    <alternativeName>
        <fullName>Complex I-B18</fullName>
        <shortName>CI-B18</shortName>
    </alternativeName>
    <alternativeName>
        <fullName>NADH-ubiquinone oxidoreductase B18 subunit</fullName>
    </alternativeName>
</protein>
<evidence type="ECO:0000250" key="1"/>
<evidence type="ECO:0000250" key="2">
    <source>
        <dbReference type="UniProtKB" id="Q9CR61"/>
    </source>
</evidence>
<evidence type="ECO:0000255" key="3">
    <source>
        <dbReference type="PROSITE-ProRule" id="PRU01150"/>
    </source>
</evidence>
<evidence type="ECO:0000256" key="4">
    <source>
        <dbReference type="SAM" id="MobiDB-lite"/>
    </source>
</evidence>
<evidence type="ECO:0000269" key="5">
    <source>
    </source>
</evidence>
<evidence type="ECO:0000269" key="6">
    <source>
    </source>
</evidence>
<evidence type="ECO:0000269" key="7">
    <source>
    </source>
</evidence>
<evidence type="ECO:0000269" key="8">
    <source>
    </source>
</evidence>
<evidence type="ECO:0000305" key="9"/>
<name>NDUB7_HUMAN</name>
<dbReference type="EMBL" id="M33374">
    <property type="protein sequence ID" value="AAA35675.1"/>
    <property type="status" value="ALT_FRAME"/>
    <property type="molecule type" value="mRNA"/>
</dbReference>
<dbReference type="EMBL" id="AF217091">
    <property type="protein sequence ID" value="AAF91223.1"/>
    <property type="molecule type" value="mRNA"/>
</dbReference>
<dbReference type="EMBL" id="AF112200">
    <property type="protein sequence ID" value="AAF17188.1"/>
    <property type="molecule type" value="mRNA"/>
</dbReference>
<dbReference type="EMBL" id="CR450354">
    <property type="protein sequence ID" value="CAG29350.1"/>
    <property type="molecule type" value="mRNA"/>
</dbReference>
<dbReference type="EMBL" id="CH471106">
    <property type="protein sequence ID" value="EAW84436.1"/>
    <property type="molecule type" value="Genomic_DNA"/>
</dbReference>
<dbReference type="EMBL" id="BC002595">
    <property type="protein sequence ID" value="AAH02595.1"/>
    <property type="molecule type" value="mRNA"/>
</dbReference>
<dbReference type="CCDS" id="CCDS12314.1"/>
<dbReference type="PIR" id="A34653">
    <property type="entry name" value="A34653"/>
</dbReference>
<dbReference type="RefSeq" id="NP_004137.2">
    <property type="nucleotide sequence ID" value="NM_004146.5"/>
</dbReference>
<dbReference type="PDB" id="5XTC">
    <property type="method" value="EM"/>
    <property type="resolution" value="3.70 A"/>
    <property type="chains" value="v=3-124"/>
</dbReference>
<dbReference type="PDB" id="5XTD">
    <property type="method" value="EM"/>
    <property type="resolution" value="3.70 A"/>
    <property type="chains" value="v=1-137"/>
</dbReference>
<dbReference type="PDB" id="5XTH">
    <property type="method" value="EM"/>
    <property type="resolution" value="3.90 A"/>
    <property type="chains" value="v=3-124"/>
</dbReference>
<dbReference type="PDB" id="5XTI">
    <property type="method" value="EM"/>
    <property type="resolution" value="17.40 A"/>
    <property type="chains" value="Bv/v=3-124"/>
</dbReference>
<dbReference type="PDBsum" id="5XTC"/>
<dbReference type="PDBsum" id="5XTD"/>
<dbReference type="PDBsum" id="5XTH"/>
<dbReference type="PDBsum" id="5XTI"/>
<dbReference type="SMR" id="P17568"/>
<dbReference type="BioGRID" id="110793">
    <property type="interactions" value="102"/>
</dbReference>
<dbReference type="ComplexPortal" id="CPX-577">
    <property type="entry name" value="Mitochondrial respiratory chain complex I"/>
</dbReference>
<dbReference type="CORUM" id="P17568"/>
<dbReference type="FunCoup" id="P17568">
    <property type="interactions" value="1894"/>
</dbReference>
<dbReference type="IntAct" id="P17568">
    <property type="interactions" value="84"/>
</dbReference>
<dbReference type="MINT" id="P17568"/>
<dbReference type="STRING" id="9606.ENSP00000215565"/>
<dbReference type="BindingDB" id="P17568"/>
<dbReference type="ChEMBL" id="CHEMBL2363065"/>
<dbReference type="DrugBank" id="DB00157">
    <property type="generic name" value="NADH"/>
</dbReference>
<dbReference type="DrugCentral" id="P17568"/>
<dbReference type="GlyGen" id="P17568">
    <property type="glycosylation" value="1 site, 1 O-linked glycan (1 site)"/>
</dbReference>
<dbReference type="iPTMnet" id="P17568"/>
<dbReference type="PhosphoSitePlus" id="P17568"/>
<dbReference type="BioMuta" id="NDUFB7"/>
<dbReference type="DMDM" id="12644140"/>
<dbReference type="jPOST" id="P17568"/>
<dbReference type="MassIVE" id="P17568"/>
<dbReference type="PaxDb" id="9606-ENSP00000215565"/>
<dbReference type="PeptideAtlas" id="P17568"/>
<dbReference type="ProteomicsDB" id="53493"/>
<dbReference type="Pumba" id="P17568"/>
<dbReference type="Antibodypedia" id="1259">
    <property type="antibodies" value="150 antibodies from 30 providers"/>
</dbReference>
<dbReference type="DNASU" id="4713"/>
<dbReference type="Ensembl" id="ENST00000215565.3">
    <property type="protein sequence ID" value="ENSP00000215565.1"/>
    <property type="gene ID" value="ENSG00000099795.7"/>
</dbReference>
<dbReference type="GeneID" id="4713"/>
<dbReference type="KEGG" id="hsa:4713"/>
<dbReference type="MANE-Select" id="ENST00000215565.3">
    <property type="protein sequence ID" value="ENSP00000215565.1"/>
    <property type="RefSeq nucleotide sequence ID" value="NM_004146.6"/>
    <property type="RefSeq protein sequence ID" value="NP_004137.2"/>
</dbReference>
<dbReference type="UCSC" id="uc002mzg.4">
    <property type="organism name" value="human"/>
</dbReference>
<dbReference type="AGR" id="HGNC:7702"/>
<dbReference type="CTD" id="4713"/>
<dbReference type="DisGeNET" id="4713"/>
<dbReference type="GeneCards" id="NDUFB7"/>
<dbReference type="HGNC" id="HGNC:7702">
    <property type="gene designation" value="NDUFB7"/>
</dbReference>
<dbReference type="HPA" id="ENSG00000099795">
    <property type="expression patterns" value="Low tissue specificity"/>
</dbReference>
<dbReference type="MalaCards" id="NDUFB7"/>
<dbReference type="MIM" id="603842">
    <property type="type" value="gene"/>
</dbReference>
<dbReference type="MIM" id="620135">
    <property type="type" value="phenotype"/>
</dbReference>
<dbReference type="neXtProt" id="NX_P17568"/>
<dbReference type="OpenTargets" id="ENSG00000099795"/>
<dbReference type="PharmGKB" id="PA31513"/>
<dbReference type="VEuPathDB" id="HostDB:ENSG00000099795"/>
<dbReference type="eggNOG" id="KOG3468">
    <property type="taxonomic scope" value="Eukaryota"/>
</dbReference>
<dbReference type="GeneTree" id="ENSGT00390000018759"/>
<dbReference type="HOGENOM" id="CLU_154847_1_0_1"/>
<dbReference type="InParanoid" id="P17568"/>
<dbReference type="OMA" id="FVYQCAH"/>
<dbReference type="OrthoDB" id="268414at2759"/>
<dbReference type="PAN-GO" id="P17568">
    <property type="GO annotations" value="1 GO annotation based on evolutionary models"/>
</dbReference>
<dbReference type="PhylomeDB" id="P17568"/>
<dbReference type="TreeFam" id="TF315152"/>
<dbReference type="BioCyc" id="MetaCyc:HS01908-MONOMER"/>
<dbReference type="PathwayCommons" id="P17568"/>
<dbReference type="Reactome" id="R-HSA-611105">
    <property type="pathway name" value="Respiratory electron transport"/>
</dbReference>
<dbReference type="Reactome" id="R-HSA-6799198">
    <property type="pathway name" value="Complex I biogenesis"/>
</dbReference>
<dbReference type="SignaLink" id="P17568"/>
<dbReference type="SIGNOR" id="P17568"/>
<dbReference type="BioGRID-ORCS" id="4713">
    <property type="hits" value="347 hits in 1160 CRISPR screens"/>
</dbReference>
<dbReference type="CD-CODE" id="FB4E32DD">
    <property type="entry name" value="Presynaptic clusters and postsynaptic densities"/>
</dbReference>
<dbReference type="ChiTaRS" id="NDUFB7">
    <property type="organism name" value="human"/>
</dbReference>
<dbReference type="GeneWiki" id="NDUFB7"/>
<dbReference type="GenomeRNAi" id="4713"/>
<dbReference type="Pharos" id="P17568">
    <property type="development level" value="Tclin"/>
</dbReference>
<dbReference type="PRO" id="PR:P17568"/>
<dbReference type="Proteomes" id="UP000005640">
    <property type="component" value="Chromosome 19"/>
</dbReference>
<dbReference type="RNAct" id="P17568">
    <property type="molecule type" value="protein"/>
</dbReference>
<dbReference type="Bgee" id="ENSG00000099795">
    <property type="expression patterns" value="Expressed in apex of heart and 201 other cell types or tissues"/>
</dbReference>
<dbReference type="ExpressionAtlas" id="P17568">
    <property type="expression patterns" value="baseline and differential"/>
</dbReference>
<dbReference type="GO" id="GO:0005743">
    <property type="term" value="C:mitochondrial inner membrane"/>
    <property type="evidence" value="ECO:0000314"/>
    <property type="project" value="ComplexPortal"/>
</dbReference>
<dbReference type="GO" id="GO:0005758">
    <property type="term" value="C:mitochondrial intermembrane space"/>
    <property type="evidence" value="ECO:0000314"/>
    <property type="project" value="UniProtKB"/>
</dbReference>
<dbReference type="GO" id="GO:0005739">
    <property type="term" value="C:mitochondrion"/>
    <property type="evidence" value="ECO:0007005"/>
    <property type="project" value="UniProtKB"/>
</dbReference>
<dbReference type="GO" id="GO:0045271">
    <property type="term" value="C:respiratory chain complex I"/>
    <property type="evidence" value="ECO:0000314"/>
    <property type="project" value="UniProtKB"/>
</dbReference>
<dbReference type="GO" id="GO:0008137">
    <property type="term" value="F:NADH dehydrogenase (ubiquinone) activity"/>
    <property type="evidence" value="ECO:0000315"/>
    <property type="project" value="UniProtKB"/>
</dbReference>
<dbReference type="GO" id="GO:0009060">
    <property type="term" value="P:aerobic respiration"/>
    <property type="evidence" value="ECO:0000303"/>
    <property type="project" value="ComplexPortal"/>
</dbReference>
<dbReference type="GO" id="GO:0006120">
    <property type="term" value="P:mitochondrial electron transport, NADH to ubiquinone"/>
    <property type="evidence" value="ECO:0000303"/>
    <property type="project" value="UniProtKB"/>
</dbReference>
<dbReference type="GO" id="GO:0042776">
    <property type="term" value="P:proton motive force-driven mitochondrial ATP synthesis"/>
    <property type="evidence" value="ECO:0000303"/>
    <property type="project" value="ComplexPortal"/>
</dbReference>
<dbReference type="InterPro" id="IPR008698">
    <property type="entry name" value="NDUB7"/>
</dbReference>
<dbReference type="PANTHER" id="PTHR20900:SF0">
    <property type="entry name" value="NADH DEHYDROGENASE [UBIQUINONE] 1 BETA SUBCOMPLEX SUBUNIT 7"/>
    <property type="match status" value="1"/>
</dbReference>
<dbReference type="PANTHER" id="PTHR20900">
    <property type="entry name" value="NADH:UBIQUINONE OXIDOREDUCTASE B18-LIKE SUBUNIT"/>
    <property type="match status" value="1"/>
</dbReference>
<dbReference type="Pfam" id="PF05676">
    <property type="entry name" value="NDUF_B7"/>
    <property type="match status" value="1"/>
</dbReference>
<dbReference type="PROSITE" id="PS51808">
    <property type="entry name" value="CHCH"/>
    <property type="match status" value="1"/>
</dbReference>
<sequence length="137" mass="16402">MGAHLVRRYLGDASVEPDPLQMPTFPPDYGFPERKEREMVATQQEMMDAQLRLQLRDYCAHHLIRLLKCKRDSFPNFLACKQERHDWDYCEHRDYVMRMKEFERERRLLQRKKRREKKAAELAKGQGPGEVDPKVAL</sequence>
<accession>P17568</accession>
<accession>Q6ICN9</accession>
<accession>Q9UI16</accession>
<proteinExistence type="evidence at protein level"/>
<feature type="initiator methionine" description="Removed">
    <location>
        <position position="1"/>
    </location>
</feature>
<feature type="chain" id="PRO_0000118811" description="NADH dehydrogenase [ubiquinone] 1 beta subcomplex subunit 7">
    <location>
        <begin position="2"/>
        <end position="137"/>
    </location>
</feature>
<feature type="domain" description="CHCH" evidence="3">
    <location>
        <begin position="56"/>
        <end position="98"/>
    </location>
</feature>
<feature type="region of interest" description="Disordered" evidence="4">
    <location>
        <begin position="113"/>
        <end position="137"/>
    </location>
</feature>
<feature type="short sequence motif" description="Cx9C motif 1" evidence="3">
    <location>
        <begin position="59"/>
        <end position="69"/>
    </location>
</feature>
<feature type="short sequence motif" description="Cx9C motif 2" evidence="3">
    <location>
        <begin position="80"/>
        <end position="90"/>
    </location>
</feature>
<feature type="modified residue" description="Phosphoserine" evidence="2">
    <location>
        <position position="73"/>
    </location>
</feature>
<feature type="lipid moiety-binding region" description="N-myristoyl glycine" evidence="1">
    <location>
        <position position="2"/>
    </location>
</feature>
<feature type="disulfide bond" evidence="3">
    <location>
        <begin position="59"/>
        <end position="90"/>
    </location>
</feature>
<feature type="disulfide bond" evidence="3">
    <location>
        <begin position="69"/>
        <end position="80"/>
    </location>
</feature>
<feature type="sequence variant" id="VAR_050591" description="In dbSNP:rs3752220.">
    <original>R</original>
    <variation>G</variation>
    <location>
        <position position="106"/>
    </location>
</feature>
<organism>
    <name type="scientific">Homo sapiens</name>
    <name type="common">Human</name>
    <dbReference type="NCBI Taxonomy" id="9606"/>
    <lineage>
        <taxon>Eukaryota</taxon>
        <taxon>Metazoa</taxon>
        <taxon>Chordata</taxon>
        <taxon>Craniata</taxon>
        <taxon>Vertebrata</taxon>
        <taxon>Euteleostomi</taxon>
        <taxon>Mammalia</taxon>
        <taxon>Eutheria</taxon>
        <taxon>Euarchontoglires</taxon>
        <taxon>Primates</taxon>
        <taxon>Haplorrhini</taxon>
        <taxon>Catarrhini</taxon>
        <taxon>Hominidae</taxon>
        <taxon>Homo</taxon>
    </lineage>
</organism>